<gene>
    <name type="primary">GA2OX2</name>
</gene>
<evidence type="ECO:0000250" key="1"/>
<evidence type="ECO:0000255" key="2"/>
<evidence type="ECO:0000255" key="3">
    <source>
        <dbReference type="PROSITE-ProRule" id="PRU00805"/>
    </source>
</evidence>
<evidence type="ECO:0000269" key="4">
    <source>
    </source>
</evidence>
<evidence type="ECO:0000305" key="5"/>
<keyword id="KW-0223">Dioxygenase</keyword>
<keyword id="KW-0408">Iron</keyword>
<keyword id="KW-0479">Metal-binding</keyword>
<keyword id="KW-0560">Oxidoreductase</keyword>
<accession>Q9XHM5</accession>
<name>G2OX2_PEA</name>
<feature type="chain" id="PRO_0000067312" description="Gibberellin 2-beta-dioxygenase 2">
    <location>
        <begin position="1"/>
        <end position="345"/>
    </location>
</feature>
<feature type="domain" description="Fe2OG dioxygenase" evidence="3">
    <location>
        <begin position="170"/>
        <end position="285"/>
    </location>
</feature>
<feature type="active site" evidence="2">
    <location>
        <position position="276"/>
    </location>
</feature>
<feature type="binding site" evidence="3">
    <location>
        <position position="209"/>
    </location>
    <ligand>
        <name>Fe cation</name>
        <dbReference type="ChEBI" id="CHEBI:24875"/>
    </ligand>
</feature>
<feature type="binding site" evidence="3">
    <location>
        <position position="211"/>
    </location>
    <ligand>
        <name>Fe cation</name>
        <dbReference type="ChEBI" id="CHEBI:24875"/>
    </ligand>
</feature>
<feature type="binding site" evidence="3">
    <location>
        <position position="266"/>
    </location>
    <ligand>
        <name>Fe cation</name>
        <dbReference type="ChEBI" id="CHEBI:24875"/>
    </ligand>
</feature>
<sequence length="345" mass="38679">MVVPSPTSMIRTKKTKAVGIPTIDLSLERSQLSELVVKACEEYGFFKVVNHSVPKEVISRLDEEGIEFFSKNSSEKRQAGTSTPFGYGCKNIGPNGDKGELEYLLLHSNPISISERSKTIAKDHPIKFSCIVNDYIKAVKDLTCEILELAAEGLWVPDKSSLSKIIKDEHSDSLLRINHYPPVKKLGNDNWDPSKIQNSNNNNIGFGEHSDPQILTILRSNNVGGLQISTHHGLWIPVPPDPSEFYVMVGDALQVLTNGRFVSVRHRVLTNTTKPRMSMMYFAAPPLNWLISPLSKMVTAHSPCLYRPFTWAQYKQAAYALRLGDTRLDQFKVQKQEDSNDSHSL</sequence>
<comment type="function">
    <text evidence="4">Catalyzes the 2-beta-hydroxylation of several biologically active gibberellins, leading to the homeostatic regulation of their endogenous level. Catabolism of gibberellins (GAs) plays a central role in plant development. Converts GA9/GA20 to GA51/GA29 and GA4/GA1 to GA34/GA8.</text>
</comment>
<comment type="catalytic activity">
    <reaction>
        <text>gibberellin A1 + 2-oxoglutarate + O2 = gibberellin A8 + succinate + CO2</text>
        <dbReference type="Rhea" id="RHEA:15005"/>
        <dbReference type="ChEBI" id="CHEBI:15379"/>
        <dbReference type="ChEBI" id="CHEBI:16526"/>
        <dbReference type="ChEBI" id="CHEBI:16810"/>
        <dbReference type="ChEBI" id="CHEBI:30031"/>
        <dbReference type="ChEBI" id="CHEBI:58524"/>
        <dbReference type="ChEBI" id="CHEBI:58594"/>
        <dbReference type="EC" id="1.14.11.13"/>
    </reaction>
</comment>
<comment type="cofactor">
    <cofactor evidence="1">
        <name>Fe cation</name>
        <dbReference type="ChEBI" id="CHEBI:24875"/>
    </cofactor>
</comment>
<comment type="pathway">
    <text>Plant hormone biosynthesis; gibberellin biosynthesis.</text>
</comment>
<comment type="tissue specificity">
    <text evidence="4">Predominantly expressed in leaves.</text>
</comment>
<comment type="similarity">
    <text evidence="5">Belongs to the iron/ascorbate-dependent oxidoreductase family. GA2OX subfamily.</text>
</comment>
<dbReference type="EC" id="1.14.11.13"/>
<dbReference type="EMBL" id="AF100954">
    <property type="protein sequence ID" value="AAD45424.1"/>
    <property type="molecule type" value="mRNA"/>
</dbReference>
<dbReference type="SMR" id="Q9XHM5"/>
<dbReference type="EnsemblPlants" id="Psat6g160000.1">
    <property type="protein sequence ID" value="Psat6g160000.1.cds"/>
    <property type="gene ID" value="Psat6g160000"/>
</dbReference>
<dbReference type="Gramene" id="Psat6g160000.1">
    <property type="protein sequence ID" value="Psat6g160000.1.cds"/>
    <property type="gene ID" value="Psat6g160000"/>
</dbReference>
<dbReference type="OrthoDB" id="288590at2759"/>
<dbReference type="BioCyc" id="MetaCyc:MONOMER-11640"/>
<dbReference type="BRENDA" id="1.14.11.13">
    <property type="organism ID" value="4872"/>
</dbReference>
<dbReference type="UniPathway" id="UPA00390"/>
<dbReference type="GO" id="GO:0045543">
    <property type="term" value="F:gibberellin 2-beta-dioxygenase activity"/>
    <property type="evidence" value="ECO:0007669"/>
    <property type="project" value="UniProtKB-EC"/>
</dbReference>
<dbReference type="GO" id="GO:0046872">
    <property type="term" value="F:metal ion binding"/>
    <property type="evidence" value="ECO:0007669"/>
    <property type="project" value="UniProtKB-KW"/>
</dbReference>
<dbReference type="GO" id="GO:0009686">
    <property type="term" value="P:gibberellin biosynthetic process"/>
    <property type="evidence" value="ECO:0007669"/>
    <property type="project" value="UniProtKB-UniPathway"/>
</dbReference>
<dbReference type="FunFam" id="2.60.120.330:FF:000025">
    <property type="entry name" value="Gibberellin 2-beta-dioxygenase 2"/>
    <property type="match status" value="1"/>
</dbReference>
<dbReference type="Gene3D" id="2.60.120.330">
    <property type="entry name" value="B-lactam Antibiotic, Isopenicillin N Synthase, Chain"/>
    <property type="match status" value="1"/>
</dbReference>
<dbReference type="InterPro" id="IPR026992">
    <property type="entry name" value="DIOX_N"/>
</dbReference>
<dbReference type="InterPro" id="IPR044861">
    <property type="entry name" value="IPNS-like_FE2OG_OXY"/>
</dbReference>
<dbReference type="InterPro" id="IPR027443">
    <property type="entry name" value="IPNS-like_sf"/>
</dbReference>
<dbReference type="InterPro" id="IPR050231">
    <property type="entry name" value="Iron_ascorbate_oxido_reductase"/>
</dbReference>
<dbReference type="InterPro" id="IPR005123">
    <property type="entry name" value="Oxoglu/Fe-dep_dioxygenase_dom"/>
</dbReference>
<dbReference type="PANTHER" id="PTHR47990">
    <property type="entry name" value="2-OXOGLUTARATE (2OG) AND FE(II)-DEPENDENT OXYGENASE SUPERFAMILY PROTEIN-RELATED"/>
    <property type="match status" value="1"/>
</dbReference>
<dbReference type="Pfam" id="PF03171">
    <property type="entry name" value="2OG-FeII_Oxy"/>
    <property type="match status" value="1"/>
</dbReference>
<dbReference type="Pfam" id="PF14226">
    <property type="entry name" value="DIOX_N"/>
    <property type="match status" value="1"/>
</dbReference>
<dbReference type="PRINTS" id="PR00682">
    <property type="entry name" value="IPNSYNTHASE"/>
</dbReference>
<dbReference type="SUPFAM" id="SSF51197">
    <property type="entry name" value="Clavaminate synthase-like"/>
    <property type="match status" value="1"/>
</dbReference>
<dbReference type="PROSITE" id="PS51471">
    <property type="entry name" value="FE2OG_OXY"/>
    <property type="match status" value="1"/>
</dbReference>
<organism>
    <name type="scientific">Pisum sativum</name>
    <name type="common">Garden pea</name>
    <name type="synonym">Lathyrus oleraceus</name>
    <dbReference type="NCBI Taxonomy" id="3888"/>
    <lineage>
        <taxon>Eukaryota</taxon>
        <taxon>Viridiplantae</taxon>
        <taxon>Streptophyta</taxon>
        <taxon>Embryophyta</taxon>
        <taxon>Tracheophyta</taxon>
        <taxon>Spermatophyta</taxon>
        <taxon>Magnoliopsida</taxon>
        <taxon>eudicotyledons</taxon>
        <taxon>Gunneridae</taxon>
        <taxon>Pentapetalae</taxon>
        <taxon>rosids</taxon>
        <taxon>fabids</taxon>
        <taxon>Fabales</taxon>
        <taxon>Fabaceae</taxon>
        <taxon>Papilionoideae</taxon>
        <taxon>50 kb inversion clade</taxon>
        <taxon>NPAAA clade</taxon>
        <taxon>Hologalegina</taxon>
        <taxon>IRL clade</taxon>
        <taxon>Fabeae</taxon>
        <taxon>Pisum</taxon>
    </lineage>
</organism>
<protein>
    <recommendedName>
        <fullName>Gibberellin 2-beta-dioxygenase 2</fullName>
        <ecNumber>1.14.11.13</ecNumber>
    </recommendedName>
    <alternativeName>
        <fullName>GA 2-oxidase 2</fullName>
    </alternativeName>
    <alternativeName>
        <fullName>Gibberellin 2-beta-hydroxylase 2</fullName>
    </alternativeName>
    <alternativeName>
        <fullName>Gibberellin 2-oxidase 2</fullName>
    </alternativeName>
</protein>
<proteinExistence type="evidence at transcript level"/>
<reference key="1">
    <citation type="journal article" date="1999" name="Plant J.">
        <title>Gibberellin 2-oxidation and the SLN gene of Pisum sativum.</title>
        <authorList>
            <person name="Lester D.R."/>
            <person name="Ross J.J."/>
            <person name="Smith J.J."/>
            <person name="Elliott R.C."/>
            <person name="Reid J.B."/>
        </authorList>
    </citation>
    <scope>NUCLEOTIDE SEQUENCE [MRNA]</scope>
    <scope>FUNCTION</scope>
    <scope>TISSUE SPECIFICITY</scope>
    <source>
        <strain>cv. Torsdag</strain>
        <tissue>Seed</tissue>
    </source>
</reference>